<sequence>MDAYWRAANYLSVGQIYLRDNPLLKQKLTLADVKPRLLGHWGTTPGLNFLYVHLNRLIQTHDLNMIYVTGPGHGGPGLVANTYLEGTYSELYPEVSQDEAGIKRLFTQFSYPGGIPSHVAAEVPGSINEGGELGYCLMHAYGAVFDNPDLIAACVVGDGEAETGALATSWHSNKFLNPARDGAVLPILHLNGYKIANPTVLARISHDELEALFMGYGYEPLFVEGADPRQMHQLMASALDKAHGKIAEIQRQARSRGFSDRPAWPMIIFRSPKGWTGPREVDGKKTEGTWRSHQVPLAKLAEVPAHLGILEEWLKSYRPWELFDESGSLRPELRELAPKGERRMGANPHANGGLLLKDLNLPDFRQYAVEIGIPGTVTAESTRTAGLYLRDVMKLNAQERNFRIFGPDETESNRLSPVFQETDRVFTGDILASDMQLSPDGRVMEVLSEQLCQGWLEGYLLTGRHGFFSCYEAFIHIVDSMFNQHAKWLKVCREVPWRKPIASLTYLLTSHVWRQDHNGFSHQDPGFIDHVANKKADIIRVYLPPDANTLLSVVDHCARSRDYINVIVAGKQPQLQWLDMGAAVAHCRAGLGVWEWASNDEGDPDAVVACAGDVPTMEALAAVMIVREAFPSLRLRVVNVVDLMALQAPSQHPHGIADDAFDRMFTTDKPVIFAYHGYPGLIHRLTYRRTNHANFHVHGYQEEGTTTTPFDMAVLNKLDRFHLAKAVVERVPSLASPREGFAHFVESKLAEHDAYIRENGEDLPEIRNWRWLASAVDAQ</sequence>
<gene>
    <name type="ordered locus">RA0587</name>
    <name type="ORF">SMa1084</name>
</gene>
<feature type="chain" id="PRO_0000193887" description="Probable phosphoketolase 2">
    <location>
        <begin position="1"/>
        <end position="779"/>
    </location>
</feature>
<name>PHK2_RHIME</name>
<accession>Q92ZA4</accession>
<evidence type="ECO:0000305" key="1"/>
<comment type="cofactor">
    <cofactor evidence="1">
        <name>thiamine diphosphate</name>
        <dbReference type="ChEBI" id="CHEBI:58937"/>
    </cofactor>
</comment>
<comment type="similarity">
    <text evidence="1">Belongs to the XFP family.</text>
</comment>
<comment type="sequence caution" evidence="1">
    <conflict type="erroneous initiation">
        <sequence resource="EMBL-CDS" id="AAK65245"/>
    </conflict>
</comment>
<reference key="1">
    <citation type="journal article" date="2001" name="Proc. Natl. Acad. Sci. U.S.A.">
        <title>Nucleotide sequence and predicted functions of the entire Sinorhizobium meliloti pSymA megaplasmid.</title>
        <authorList>
            <person name="Barnett M.J."/>
            <person name="Fisher R.F."/>
            <person name="Jones T."/>
            <person name="Komp C."/>
            <person name="Abola A.P."/>
            <person name="Barloy-Hubler F."/>
            <person name="Bowser L."/>
            <person name="Capela D."/>
            <person name="Galibert F."/>
            <person name="Gouzy J."/>
            <person name="Gurjal M."/>
            <person name="Hong A."/>
            <person name="Huizar L."/>
            <person name="Hyman R.W."/>
            <person name="Kahn D."/>
            <person name="Kahn M.L."/>
            <person name="Kalman S."/>
            <person name="Keating D.H."/>
            <person name="Palm C."/>
            <person name="Peck M.C."/>
            <person name="Surzycki R."/>
            <person name="Wells D.H."/>
            <person name="Yeh K.-C."/>
            <person name="Davis R.W."/>
            <person name="Federspiel N.A."/>
            <person name="Long S.R."/>
        </authorList>
    </citation>
    <scope>NUCLEOTIDE SEQUENCE [LARGE SCALE GENOMIC DNA]</scope>
    <source>
        <strain>1021</strain>
    </source>
</reference>
<reference key="2">
    <citation type="journal article" date="2001" name="Science">
        <title>The composite genome of the legume symbiont Sinorhizobium meliloti.</title>
        <authorList>
            <person name="Galibert F."/>
            <person name="Finan T.M."/>
            <person name="Long S.R."/>
            <person name="Puehler A."/>
            <person name="Abola P."/>
            <person name="Ampe F."/>
            <person name="Barloy-Hubler F."/>
            <person name="Barnett M.J."/>
            <person name="Becker A."/>
            <person name="Boistard P."/>
            <person name="Bothe G."/>
            <person name="Boutry M."/>
            <person name="Bowser L."/>
            <person name="Buhrmester J."/>
            <person name="Cadieu E."/>
            <person name="Capela D."/>
            <person name="Chain P."/>
            <person name="Cowie A."/>
            <person name="Davis R.W."/>
            <person name="Dreano S."/>
            <person name="Federspiel N.A."/>
            <person name="Fisher R.F."/>
            <person name="Gloux S."/>
            <person name="Godrie T."/>
            <person name="Goffeau A."/>
            <person name="Golding B."/>
            <person name="Gouzy J."/>
            <person name="Gurjal M."/>
            <person name="Hernandez-Lucas I."/>
            <person name="Hong A."/>
            <person name="Huizar L."/>
            <person name="Hyman R.W."/>
            <person name="Jones T."/>
            <person name="Kahn D."/>
            <person name="Kahn M.L."/>
            <person name="Kalman S."/>
            <person name="Keating D.H."/>
            <person name="Kiss E."/>
            <person name="Komp C."/>
            <person name="Lelaure V."/>
            <person name="Masuy D."/>
            <person name="Palm C."/>
            <person name="Peck M.C."/>
            <person name="Pohl T.M."/>
            <person name="Portetelle D."/>
            <person name="Purnelle B."/>
            <person name="Ramsperger U."/>
            <person name="Surzycki R."/>
            <person name="Thebault P."/>
            <person name="Vandenbol M."/>
            <person name="Vorhoelter F.J."/>
            <person name="Weidner S."/>
            <person name="Wells D.H."/>
            <person name="Wong K."/>
            <person name="Yeh K.-C."/>
            <person name="Batut J."/>
        </authorList>
    </citation>
    <scope>NUCLEOTIDE SEQUENCE [LARGE SCALE GENOMIC DNA]</scope>
    <source>
        <strain>1021</strain>
    </source>
</reference>
<organism>
    <name type="scientific">Rhizobium meliloti (strain 1021)</name>
    <name type="common">Ensifer meliloti</name>
    <name type="synonym">Sinorhizobium meliloti</name>
    <dbReference type="NCBI Taxonomy" id="266834"/>
    <lineage>
        <taxon>Bacteria</taxon>
        <taxon>Pseudomonadati</taxon>
        <taxon>Pseudomonadota</taxon>
        <taxon>Alphaproteobacteria</taxon>
        <taxon>Hyphomicrobiales</taxon>
        <taxon>Rhizobiaceae</taxon>
        <taxon>Sinorhizobium/Ensifer group</taxon>
        <taxon>Sinorhizobium</taxon>
    </lineage>
</organism>
<geneLocation type="plasmid">
    <name>pSymA</name>
    <name>megaplasmid 1</name>
</geneLocation>
<keyword id="KW-0456">Lyase</keyword>
<keyword id="KW-0614">Plasmid</keyword>
<keyword id="KW-1185">Reference proteome</keyword>
<keyword id="KW-0786">Thiamine pyrophosphate</keyword>
<proteinExistence type="inferred from homology"/>
<protein>
    <recommendedName>
        <fullName>Probable phosphoketolase 2</fullName>
        <ecNumber>4.1.2.-</ecNumber>
    </recommendedName>
</protein>
<dbReference type="EC" id="4.1.2.-"/>
<dbReference type="EMBL" id="AE006469">
    <property type="protein sequence ID" value="AAK65245.1"/>
    <property type="status" value="ALT_INIT"/>
    <property type="molecule type" value="Genomic_DNA"/>
</dbReference>
<dbReference type="PIR" id="C95335">
    <property type="entry name" value="C95335"/>
</dbReference>
<dbReference type="RefSeq" id="NP_435833.1">
    <property type="nucleotide sequence ID" value="NC_003037.1"/>
</dbReference>
<dbReference type="SMR" id="Q92ZA4"/>
<dbReference type="EnsemblBacteria" id="AAK65245">
    <property type="protein sequence ID" value="AAK65245"/>
    <property type="gene ID" value="SMa1084"/>
</dbReference>
<dbReference type="KEGG" id="sme:SMa1084"/>
<dbReference type="PATRIC" id="fig|266834.11.peg.602"/>
<dbReference type="HOGENOM" id="CLU_013954_2_0_5"/>
<dbReference type="OrthoDB" id="9768449at2"/>
<dbReference type="Proteomes" id="UP000001976">
    <property type="component" value="Plasmid pSymA"/>
</dbReference>
<dbReference type="GO" id="GO:0016832">
    <property type="term" value="F:aldehyde-lyase activity"/>
    <property type="evidence" value="ECO:0007669"/>
    <property type="project" value="UniProtKB-UniRule"/>
</dbReference>
<dbReference type="GO" id="GO:0005975">
    <property type="term" value="P:carbohydrate metabolic process"/>
    <property type="evidence" value="ECO:0007669"/>
    <property type="project" value="InterPro"/>
</dbReference>
<dbReference type="CDD" id="cd02011">
    <property type="entry name" value="TPP_PK"/>
    <property type="match status" value="1"/>
</dbReference>
<dbReference type="FunFam" id="3.40.50.970:FF:000091">
    <property type="entry name" value="Xylulose-5-phosphate/fructose-6-phosphate phosphoketolase"/>
    <property type="match status" value="1"/>
</dbReference>
<dbReference type="Gene3D" id="3.40.50.920">
    <property type="match status" value="1"/>
</dbReference>
<dbReference type="Gene3D" id="3.40.50.970">
    <property type="match status" value="2"/>
</dbReference>
<dbReference type="HAMAP" id="MF_01403">
    <property type="entry name" value="Phosphoketolase"/>
    <property type="match status" value="1"/>
</dbReference>
<dbReference type="InterPro" id="IPR023962">
    <property type="entry name" value="Phosphoketolase"/>
</dbReference>
<dbReference type="InterPro" id="IPR029061">
    <property type="entry name" value="THDP-binding"/>
</dbReference>
<dbReference type="InterPro" id="IPR009014">
    <property type="entry name" value="Transketo_C/PFOR_II"/>
</dbReference>
<dbReference type="InterPro" id="IPR005593">
    <property type="entry name" value="Xul5P/Fru6P_PKetolase"/>
</dbReference>
<dbReference type="InterPro" id="IPR018969">
    <property type="entry name" value="Xul5P/Fru6P_PKetolase_C"/>
</dbReference>
<dbReference type="InterPro" id="IPR019790">
    <property type="entry name" value="Xul5P/Fru6P_PKetolase_CS"/>
</dbReference>
<dbReference type="InterPro" id="IPR018970">
    <property type="entry name" value="Xul5P/Fru6P_PKetolase_N"/>
</dbReference>
<dbReference type="InterPro" id="IPR019789">
    <property type="entry name" value="Xul5P/Fru6P_PKetolase_ThDP_BS"/>
</dbReference>
<dbReference type="NCBIfam" id="NF003616">
    <property type="entry name" value="PRK05261.1-1"/>
    <property type="match status" value="1"/>
</dbReference>
<dbReference type="NCBIfam" id="NF003617">
    <property type="entry name" value="PRK05261.1-2"/>
    <property type="match status" value="1"/>
</dbReference>
<dbReference type="NCBIfam" id="NF003619">
    <property type="entry name" value="PRK05261.1-4"/>
    <property type="match status" value="1"/>
</dbReference>
<dbReference type="NCBIfam" id="NF003621">
    <property type="entry name" value="PRK05261.1-6"/>
    <property type="match status" value="1"/>
</dbReference>
<dbReference type="PANTHER" id="PTHR31273">
    <property type="entry name" value="PHOSPHOKETOLASE-RELATED"/>
    <property type="match status" value="1"/>
</dbReference>
<dbReference type="PANTHER" id="PTHR31273:SF0">
    <property type="entry name" value="PHOSPHOKETOLASE-RELATED"/>
    <property type="match status" value="1"/>
</dbReference>
<dbReference type="Pfam" id="PF03894">
    <property type="entry name" value="XFP"/>
    <property type="match status" value="1"/>
</dbReference>
<dbReference type="Pfam" id="PF09363">
    <property type="entry name" value="XFP_C"/>
    <property type="match status" value="1"/>
</dbReference>
<dbReference type="Pfam" id="PF09364">
    <property type="entry name" value="XFP_N"/>
    <property type="match status" value="1"/>
</dbReference>
<dbReference type="PIRSF" id="PIRSF017245">
    <property type="entry name" value="Phosphoketolase"/>
    <property type="match status" value="1"/>
</dbReference>
<dbReference type="SUPFAM" id="SSF52518">
    <property type="entry name" value="Thiamin diphosphate-binding fold (THDP-binding)"/>
    <property type="match status" value="2"/>
</dbReference>
<dbReference type="SUPFAM" id="SSF52922">
    <property type="entry name" value="TK C-terminal domain-like"/>
    <property type="match status" value="1"/>
</dbReference>
<dbReference type="PROSITE" id="PS60002">
    <property type="entry name" value="PHOSPHOKETOLASE_1"/>
    <property type="match status" value="1"/>
</dbReference>
<dbReference type="PROSITE" id="PS60003">
    <property type="entry name" value="PHOSPHOKETOLASE_2"/>
    <property type="match status" value="1"/>
</dbReference>